<protein>
    <recommendedName>
        <fullName evidence="1">Ribosome modulation factor</fullName>
        <shortName evidence="1">RMF</shortName>
    </recommendedName>
</protein>
<name>RMF_SHEAM</name>
<sequence>MKRQKRDRLDRAFAKGFQAGVGGRSKEMCPYSNLDSRSQWLGGWREGVDGRITGLFTK</sequence>
<accession>A1S605</accession>
<gene>
    <name evidence="1" type="primary">rmf</name>
    <name type="ordered locus">Sama_1604</name>
</gene>
<feature type="chain" id="PRO_0000416482" description="Ribosome modulation factor">
    <location>
        <begin position="1"/>
        <end position="58"/>
    </location>
</feature>
<organism>
    <name type="scientific">Shewanella amazonensis (strain ATCC BAA-1098 / SB2B)</name>
    <dbReference type="NCBI Taxonomy" id="326297"/>
    <lineage>
        <taxon>Bacteria</taxon>
        <taxon>Pseudomonadati</taxon>
        <taxon>Pseudomonadota</taxon>
        <taxon>Gammaproteobacteria</taxon>
        <taxon>Alteromonadales</taxon>
        <taxon>Shewanellaceae</taxon>
        <taxon>Shewanella</taxon>
    </lineage>
</organism>
<reference key="1">
    <citation type="submission" date="2006-12" db="EMBL/GenBank/DDBJ databases">
        <title>Complete sequence of Shewanella amazonensis SB2B.</title>
        <authorList>
            <consortium name="US DOE Joint Genome Institute"/>
            <person name="Copeland A."/>
            <person name="Lucas S."/>
            <person name="Lapidus A."/>
            <person name="Barry K."/>
            <person name="Detter J.C."/>
            <person name="Glavina del Rio T."/>
            <person name="Hammon N."/>
            <person name="Israni S."/>
            <person name="Dalin E."/>
            <person name="Tice H."/>
            <person name="Pitluck S."/>
            <person name="Munk A.C."/>
            <person name="Brettin T."/>
            <person name="Bruce D."/>
            <person name="Han C."/>
            <person name="Tapia R."/>
            <person name="Gilna P."/>
            <person name="Schmutz J."/>
            <person name="Larimer F."/>
            <person name="Land M."/>
            <person name="Hauser L."/>
            <person name="Kyrpides N."/>
            <person name="Mikhailova N."/>
            <person name="Fredrickson J."/>
            <person name="Richardson P."/>
        </authorList>
    </citation>
    <scope>NUCLEOTIDE SEQUENCE [LARGE SCALE GENOMIC DNA]</scope>
    <source>
        <strain>ATCC BAA-1098 / SB2B</strain>
    </source>
</reference>
<evidence type="ECO:0000255" key="1">
    <source>
        <dbReference type="HAMAP-Rule" id="MF_00919"/>
    </source>
</evidence>
<dbReference type="EMBL" id="CP000507">
    <property type="protein sequence ID" value="ABL99811.1"/>
    <property type="molecule type" value="Genomic_DNA"/>
</dbReference>
<dbReference type="SMR" id="A1S605"/>
<dbReference type="STRING" id="326297.Sama_1604"/>
<dbReference type="KEGG" id="saz:Sama_1604"/>
<dbReference type="eggNOG" id="COG3130">
    <property type="taxonomic scope" value="Bacteria"/>
</dbReference>
<dbReference type="HOGENOM" id="CLU_203350_0_0_6"/>
<dbReference type="OrthoDB" id="5917763at2"/>
<dbReference type="Proteomes" id="UP000009175">
    <property type="component" value="Chromosome"/>
</dbReference>
<dbReference type="GO" id="GO:0005737">
    <property type="term" value="C:cytoplasm"/>
    <property type="evidence" value="ECO:0007669"/>
    <property type="project" value="UniProtKB-SubCell"/>
</dbReference>
<dbReference type="GO" id="GO:0006417">
    <property type="term" value="P:regulation of translation"/>
    <property type="evidence" value="ECO:0007669"/>
    <property type="project" value="UniProtKB-UniRule"/>
</dbReference>
<dbReference type="Gene3D" id="1.10.10.620">
    <property type="entry name" value="ribosome modulation factor like domain"/>
    <property type="match status" value="1"/>
</dbReference>
<dbReference type="HAMAP" id="MF_00919">
    <property type="entry name" value="RMF"/>
    <property type="match status" value="1"/>
</dbReference>
<dbReference type="InterPro" id="IPR007040">
    <property type="entry name" value="Ribosome_modulation_factor"/>
</dbReference>
<dbReference type="InterPro" id="IPR023200">
    <property type="entry name" value="RMF_sf"/>
</dbReference>
<dbReference type="NCBIfam" id="NF011162">
    <property type="entry name" value="PRK14563.1"/>
    <property type="match status" value="1"/>
</dbReference>
<dbReference type="NCBIfam" id="NF041886">
    <property type="entry name" value="Rmf_CrpP_fam"/>
    <property type="match status" value="1"/>
</dbReference>
<dbReference type="Pfam" id="PF04957">
    <property type="entry name" value="RMF"/>
    <property type="match status" value="1"/>
</dbReference>
<proteinExistence type="inferred from homology"/>
<comment type="function">
    <text evidence="1">During stationary phase, converts 70S ribosomes to an inactive dimeric form (100S ribosomes).</text>
</comment>
<comment type="subcellular location">
    <subcellularLocation>
        <location evidence="1">Cytoplasm</location>
    </subcellularLocation>
</comment>
<comment type="similarity">
    <text evidence="1">Belongs to the ribosome modulation factor family.</text>
</comment>
<keyword id="KW-0963">Cytoplasm</keyword>
<keyword id="KW-1185">Reference proteome</keyword>
<keyword id="KW-0810">Translation regulation</keyword>